<dbReference type="EMBL" id="CP000555">
    <property type="protein sequence ID" value="ABM93804.1"/>
    <property type="molecule type" value="Genomic_DNA"/>
</dbReference>
<dbReference type="RefSeq" id="WP_011828442.1">
    <property type="nucleotide sequence ID" value="NC_008825.1"/>
</dbReference>
<dbReference type="SMR" id="A2SE15"/>
<dbReference type="STRING" id="420662.Mpe_A0842"/>
<dbReference type="KEGG" id="mpt:Mpe_A0842"/>
<dbReference type="eggNOG" id="COG1826">
    <property type="taxonomic scope" value="Bacteria"/>
</dbReference>
<dbReference type="HOGENOM" id="CLU_086034_1_1_4"/>
<dbReference type="Proteomes" id="UP000000366">
    <property type="component" value="Chromosome"/>
</dbReference>
<dbReference type="GO" id="GO:0033281">
    <property type="term" value="C:TAT protein transport complex"/>
    <property type="evidence" value="ECO:0007669"/>
    <property type="project" value="UniProtKB-UniRule"/>
</dbReference>
<dbReference type="GO" id="GO:0008320">
    <property type="term" value="F:protein transmembrane transporter activity"/>
    <property type="evidence" value="ECO:0007669"/>
    <property type="project" value="UniProtKB-UniRule"/>
</dbReference>
<dbReference type="GO" id="GO:0043953">
    <property type="term" value="P:protein transport by the Tat complex"/>
    <property type="evidence" value="ECO:0007669"/>
    <property type="project" value="UniProtKB-UniRule"/>
</dbReference>
<dbReference type="Gene3D" id="1.20.5.3310">
    <property type="match status" value="1"/>
</dbReference>
<dbReference type="HAMAP" id="MF_00237">
    <property type="entry name" value="TatB"/>
    <property type="match status" value="1"/>
</dbReference>
<dbReference type="InterPro" id="IPR003369">
    <property type="entry name" value="TatA/B/E"/>
</dbReference>
<dbReference type="InterPro" id="IPR018448">
    <property type="entry name" value="TatB"/>
</dbReference>
<dbReference type="NCBIfam" id="TIGR01410">
    <property type="entry name" value="tatB"/>
    <property type="match status" value="1"/>
</dbReference>
<dbReference type="PANTHER" id="PTHR33162">
    <property type="entry name" value="SEC-INDEPENDENT PROTEIN TRANSLOCASE PROTEIN TATA, CHLOROPLASTIC"/>
    <property type="match status" value="1"/>
</dbReference>
<dbReference type="PANTHER" id="PTHR33162:SF1">
    <property type="entry name" value="SEC-INDEPENDENT PROTEIN TRANSLOCASE PROTEIN TATA, CHLOROPLASTIC"/>
    <property type="match status" value="1"/>
</dbReference>
<dbReference type="Pfam" id="PF02416">
    <property type="entry name" value="TatA_B_E"/>
    <property type="match status" value="1"/>
</dbReference>
<dbReference type="PRINTS" id="PR01506">
    <property type="entry name" value="TATBPROTEIN"/>
</dbReference>
<name>TATB_METPP</name>
<accession>A2SE15</accession>
<gene>
    <name evidence="1" type="primary">tatB</name>
    <name type="ordered locus">Mpe_A0842</name>
</gene>
<protein>
    <recommendedName>
        <fullName evidence="1">Sec-independent protein translocase protein TatB</fullName>
    </recommendedName>
</protein>
<evidence type="ECO:0000255" key="1">
    <source>
        <dbReference type="HAMAP-Rule" id="MF_00237"/>
    </source>
</evidence>
<evidence type="ECO:0000256" key="2">
    <source>
        <dbReference type="SAM" id="MobiDB-lite"/>
    </source>
</evidence>
<organism>
    <name type="scientific">Methylibium petroleiphilum (strain ATCC BAA-1232 / LMG 22953 / PM1)</name>
    <dbReference type="NCBI Taxonomy" id="420662"/>
    <lineage>
        <taxon>Bacteria</taxon>
        <taxon>Pseudomonadati</taxon>
        <taxon>Pseudomonadota</taxon>
        <taxon>Betaproteobacteria</taxon>
        <taxon>Burkholderiales</taxon>
        <taxon>Sphaerotilaceae</taxon>
        <taxon>Methylibium</taxon>
    </lineage>
</organism>
<reference key="1">
    <citation type="journal article" date="2007" name="J. Bacteriol.">
        <title>Whole-genome analysis of the methyl tert-butyl ether-degrading beta-proteobacterium Methylibium petroleiphilum PM1.</title>
        <authorList>
            <person name="Kane S.R."/>
            <person name="Chakicherla A.Y."/>
            <person name="Chain P.S.G."/>
            <person name="Schmidt R."/>
            <person name="Shin M.W."/>
            <person name="Legler T.C."/>
            <person name="Scow K.M."/>
            <person name="Larimer F.W."/>
            <person name="Lucas S.M."/>
            <person name="Richardson P.M."/>
            <person name="Hristova K.R."/>
        </authorList>
    </citation>
    <scope>NUCLEOTIDE SEQUENCE [LARGE SCALE GENOMIC DNA]</scope>
    <source>
        <strain>ATCC BAA-1232 / LMG 22953 / PM1</strain>
    </source>
</reference>
<sequence length="170" mass="18684">MIDFGFDKIALIGAVALIVIGPERLPKVARTVGHLMGKAQRYVADVKAEVNRSIELEELKKMKTDFEDAARNVEQSVSSEVNRTSSEMNQAWESLSSSDGNGGSSGSAAADSYHAGEPLSEPPPAYTHPRKNWRLKRGAMPQWYKQRHGVRAKAQSGAARVARFRPPRPL</sequence>
<keyword id="KW-0997">Cell inner membrane</keyword>
<keyword id="KW-1003">Cell membrane</keyword>
<keyword id="KW-0472">Membrane</keyword>
<keyword id="KW-0653">Protein transport</keyword>
<keyword id="KW-1185">Reference proteome</keyword>
<keyword id="KW-0811">Translocation</keyword>
<keyword id="KW-0812">Transmembrane</keyword>
<keyword id="KW-1133">Transmembrane helix</keyword>
<keyword id="KW-0813">Transport</keyword>
<comment type="function">
    <text evidence="1">Part of the twin-arginine translocation (Tat) system that transports large folded proteins containing a characteristic twin-arginine motif in their signal peptide across membranes. Together with TatC, TatB is part of a receptor directly interacting with Tat signal peptides. TatB may form an oligomeric binding site that transiently accommodates folded Tat precursor proteins before their translocation.</text>
</comment>
<comment type="subunit">
    <text evidence="1">The Tat system comprises two distinct complexes: a TatABC complex, containing multiple copies of TatA, TatB and TatC subunits, and a separate TatA complex, containing only TatA subunits. Substrates initially bind to the TatABC complex, which probably triggers association of the separate TatA complex to form the active translocon.</text>
</comment>
<comment type="subcellular location">
    <subcellularLocation>
        <location evidence="1">Cell inner membrane</location>
        <topology evidence="1">Single-pass membrane protein</topology>
    </subcellularLocation>
</comment>
<comment type="similarity">
    <text evidence="1">Belongs to the TatB family.</text>
</comment>
<proteinExistence type="inferred from homology"/>
<feature type="chain" id="PRO_0000301184" description="Sec-independent protein translocase protein TatB">
    <location>
        <begin position="1"/>
        <end position="170"/>
    </location>
</feature>
<feature type="transmembrane region" description="Helical" evidence="1">
    <location>
        <begin position="1"/>
        <end position="21"/>
    </location>
</feature>
<feature type="region of interest" description="Disordered" evidence="2">
    <location>
        <begin position="69"/>
        <end position="170"/>
    </location>
</feature>
<feature type="compositionally biased region" description="Polar residues" evidence="2">
    <location>
        <begin position="73"/>
        <end position="93"/>
    </location>
</feature>
<feature type="compositionally biased region" description="Basic residues" evidence="2">
    <location>
        <begin position="128"/>
        <end position="137"/>
    </location>
</feature>